<sequence>MINFFGGKAPTAAQPASSTSTAVNGARFASVSTSSSASASAAGQPPLKKTKIAPSPVTVVTTVKKKVAPPTSVEPRDPIAALSGYNSKNALPEEKRRRIIEERLAAQRQKSIESSLEAQLRAPTKSLSKSQSASSTSRRSAASFSKPKTKKPRKKVVDSDSDHDEFGDYGKSSRKPSTAPSTPRASKRTSVDPHPTSDSYQKVGRDGVQPNYTVPRDIRASTSPTNTTAIPIDTQSRPSKPISSADIVTANIKNYGPYFNGLGDAPRAVLEYPGTDASEEFLLLVPKDADEYDPLMELLATVRAIVTHYLTPEQRKAFGSLDSLEVSNNAGMILPSATHGASASTSAVCNMVAALTDSNGINGARAKSADLLDGQGSKAERRNHLVGAGTYKDTGSMTPEPHANGISQTAPVSPTSQTSGISASAGGSSVAKTVLVNNALLRLDSPAPTELSVASDHSSTPAASCGTDPDSILRSFTKARNRRDGPLFMRTLARFNSALAALRDTGALAANIADLGSCTGVPEGIWRLIQDQVYARVVGPRVEELGRYQAFSDNVYGELLPRFMSEIAQLTLLGPEKVFVDLGSGVGNLLIQTSLQTGAEAYGCEMMRIPASLASQQVVEAQLRWAAWGLRGGSAIEAWQGDFGDHGGVRDVLKRADVVLVNNYAFLPKTNENLSLLFLDLPDGAKVVSLKPFVPPDFRLTQRTLSSPLAILRVTERLYTSGCVSWADGGGKYYIQEVDRSLVREFLQNAGAATRAKRGKVSEGDDTVAASDLMVGQDVRRKRWKAALQDDDEDDDEF</sequence>
<protein>
    <recommendedName>
        <fullName>Histone-lysine N-methyltransferase, H3 lysine-79 specific</fullName>
        <ecNumber>2.1.1.360</ecNumber>
    </recommendedName>
    <alternativeName>
        <fullName>Histone H3-K79 methyltransferase</fullName>
        <shortName>H3-K79-HMTase</shortName>
    </alternativeName>
</protein>
<reference key="1">
    <citation type="journal article" date="2006" name="Nature">
        <title>Insights from the genome of the biotrophic fungal plant pathogen Ustilago maydis.</title>
        <authorList>
            <person name="Kaemper J."/>
            <person name="Kahmann R."/>
            <person name="Boelker M."/>
            <person name="Ma L.-J."/>
            <person name="Brefort T."/>
            <person name="Saville B.J."/>
            <person name="Banuett F."/>
            <person name="Kronstad J.W."/>
            <person name="Gold S.E."/>
            <person name="Mueller O."/>
            <person name="Perlin M.H."/>
            <person name="Woesten H.A.B."/>
            <person name="de Vries R."/>
            <person name="Ruiz-Herrera J."/>
            <person name="Reynaga-Pena C.G."/>
            <person name="Snetselaar K."/>
            <person name="McCann M."/>
            <person name="Perez-Martin J."/>
            <person name="Feldbruegge M."/>
            <person name="Basse C.W."/>
            <person name="Steinberg G."/>
            <person name="Ibeas J.I."/>
            <person name="Holloman W."/>
            <person name="Guzman P."/>
            <person name="Farman M.L."/>
            <person name="Stajich J.E."/>
            <person name="Sentandreu R."/>
            <person name="Gonzalez-Prieto J.M."/>
            <person name="Kennell J.C."/>
            <person name="Molina L."/>
            <person name="Schirawski J."/>
            <person name="Mendoza-Mendoza A."/>
            <person name="Greilinger D."/>
            <person name="Muench K."/>
            <person name="Roessel N."/>
            <person name="Scherer M."/>
            <person name="Vranes M."/>
            <person name="Ladendorf O."/>
            <person name="Vincon V."/>
            <person name="Fuchs U."/>
            <person name="Sandrock B."/>
            <person name="Meng S."/>
            <person name="Ho E.C.H."/>
            <person name="Cahill M.J."/>
            <person name="Boyce K.J."/>
            <person name="Klose J."/>
            <person name="Klosterman S.J."/>
            <person name="Deelstra H.J."/>
            <person name="Ortiz-Castellanos L."/>
            <person name="Li W."/>
            <person name="Sanchez-Alonso P."/>
            <person name="Schreier P.H."/>
            <person name="Haeuser-Hahn I."/>
            <person name="Vaupel M."/>
            <person name="Koopmann E."/>
            <person name="Friedrich G."/>
            <person name="Voss H."/>
            <person name="Schlueter T."/>
            <person name="Margolis J."/>
            <person name="Platt D."/>
            <person name="Swimmer C."/>
            <person name="Gnirke A."/>
            <person name="Chen F."/>
            <person name="Vysotskaia V."/>
            <person name="Mannhaupt G."/>
            <person name="Gueldener U."/>
            <person name="Muensterkoetter M."/>
            <person name="Haase D."/>
            <person name="Oesterheld M."/>
            <person name="Mewes H.-W."/>
            <person name="Mauceli E.W."/>
            <person name="DeCaprio D."/>
            <person name="Wade C.M."/>
            <person name="Butler J."/>
            <person name="Young S.K."/>
            <person name="Jaffe D.B."/>
            <person name="Calvo S.E."/>
            <person name="Nusbaum C."/>
            <person name="Galagan J.E."/>
            <person name="Birren B.W."/>
        </authorList>
    </citation>
    <scope>NUCLEOTIDE SEQUENCE [LARGE SCALE GENOMIC DNA]</scope>
    <source>
        <strain>DSM 14603 / FGSC 9021 / UM521</strain>
    </source>
</reference>
<reference key="2">
    <citation type="submission" date="2014-09" db="EMBL/GenBank/DDBJ databases">
        <authorList>
            <person name="Gueldener U."/>
            <person name="Muensterkoetter M."/>
            <person name="Walter M.C."/>
            <person name="Mannhaupt G."/>
            <person name="Kahmann R."/>
        </authorList>
    </citation>
    <scope>GENOME REANNOTATION</scope>
    <source>
        <strain>DSM 14603 / FGSC 9021 / UM521</strain>
    </source>
</reference>
<dbReference type="EC" id="2.1.1.360"/>
<dbReference type="EMBL" id="CM003157">
    <property type="protein sequence ID" value="KIS66554.1"/>
    <property type="molecule type" value="Genomic_DNA"/>
</dbReference>
<dbReference type="RefSeq" id="XP_011391857.1">
    <property type="nucleotide sequence ID" value="XM_011393555.1"/>
</dbReference>
<dbReference type="SMR" id="Q4P2W8"/>
<dbReference type="STRING" id="237631.Q4P2W8"/>
<dbReference type="EnsemblFungi" id="KIS66554">
    <property type="protein sequence ID" value="KIS66554"/>
    <property type="gene ID" value="UMAG_05545"/>
</dbReference>
<dbReference type="GeneID" id="23565406"/>
<dbReference type="KEGG" id="uma:UMAG_05545"/>
<dbReference type="VEuPathDB" id="FungiDB:UMAG_05545"/>
<dbReference type="eggNOG" id="KOG3924">
    <property type="taxonomic scope" value="Eukaryota"/>
</dbReference>
<dbReference type="HOGENOM" id="CLU_020139_0_0_1"/>
<dbReference type="InParanoid" id="Q4P2W8"/>
<dbReference type="OMA" id="GCVSWAD"/>
<dbReference type="OrthoDB" id="443402at2759"/>
<dbReference type="Proteomes" id="UP000000561">
    <property type="component" value="Chromosome 18"/>
</dbReference>
<dbReference type="GO" id="GO:0000781">
    <property type="term" value="C:chromosome, telomeric region"/>
    <property type="evidence" value="ECO:0007669"/>
    <property type="project" value="GOC"/>
</dbReference>
<dbReference type="GO" id="GO:0005634">
    <property type="term" value="C:nucleus"/>
    <property type="evidence" value="ECO:0000318"/>
    <property type="project" value="GO_Central"/>
</dbReference>
<dbReference type="GO" id="GO:0031151">
    <property type="term" value="F:histone H3K79 methyltransferase activity"/>
    <property type="evidence" value="ECO:0000318"/>
    <property type="project" value="GO_Central"/>
</dbReference>
<dbReference type="GO" id="GO:0140956">
    <property type="term" value="F:histone H3K79 trimethyltransferase activity"/>
    <property type="evidence" value="ECO:0007669"/>
    <property type="project" value="UniProtKB-EC"/>
</dbReference>
<dbReference type="GO" id="GO:0000077">
    <property type="term" value="P:DNA damage checkpoint signaling"/>
    <property type="evidence" value="ECO:0000318"/>
    <property type="project" value="GO_Central"/>
</dbReference>
<dbReference type="GO" id="GO:0006281">
    <property type="term" value="P:DNA repair"/>
    <property type="evidence" value="ECO:0000318"/>
    <property type="project" value="GO_Central"/>
</dbReference>
<dbReference type="GO" id="GO:0032259">
    <property type="term" value="P:methylation"/>
    <property type="evidence" value="ECO:0007669"/>
    <property type="project" value="UniProtKB-KW"/>
</dbReference>
<dbReference type="GO" id="GO:0031509">
    <property type="term" value="P:subtelomeric heterochromatin formation"/>
    <property type="evidence" value="ECO:0000318"/>
    <property type="project" value="GO_Central"/>
</dbReference>
<dbReference type="FunFam" id="3.40.50.150:FF:000033">
    <property type="entry name" value="Histone-lysine N-methyltransferase, H3 lysine-79 specific"/>
    <property type="match status" value="1"/>
</dbReference>
<dbReference type="Gene3D" id="1.10.260.170">
    <property type="match status" value="1"/>
</dbReference>
<dbReference type="Gene3D" id="3.40.50.150">
    <property type="entry name" value="Vaccinia Virus protein VP39"/>
    <property type="match status" value="1"/>
</dbReference>
<dbReference type="InterPro" id="IPR025789">
    <property type="entry name" value="DOT1_dom"/>
</dbReference>
<dbReference type="InterPro" id="IPR030445">
    <property type="entry name" value="H3-K79_meTrfase"/>
</dbReference>
<dbReference type="InterPro" id="IPR029063">
    <property type="entry name" value="SAM-dependent_MTases_sf"/>
</dbReference>
<dbReference type="PANTHER" id="PTHR21451">
    <property type="entry name" value="HISTONE H3 METHYLTRANSFERASE"/>
    <property type="match status" value="1"/>
</dbReference>
<dbReference type="PANTHER" id="PTHR21451:SF0">
    <property type="entry name" value="HISTONE-LYSINE N-METHYLTRANSFERASE, H3 LYSINE-79 SPECIFIC"/>
    <property type="match status" value="1"/>
</dbReference>
<dbReference type="Pfam" id="PF08123">
    <property type="entry name" value="DOT1"/>
    <property type="match status" value="1"/>
</dbReference>
<dbReference type="SUPFAM" id="SSF53335">
    <property type="entry name" value="S-adenosyl-L-methionine-dependent methyltransferases"/>
    <property type="match status" value="1"/>
</dbReference>
<dbReference type="PROSITE" id="PS51569">
    <property type="entry name" value="DOT1"/>
    <property type="match status" value="1"/>
</dbReference>
<name>DOT1_MYCMD</name>
<accession>Q4P2W8</accession>
<accession>A0A0D1DQ97</accession>
<proteinExistence type="inferred from homology"/>
<keyword id="KW-0156">Chromatin regulator</keyword>
<keyword id="KW-0489">Methyltransferase</keyword>
<keyword id="KW-0539">Nucleus</keyword>
<keyword id="KW-1185">Reference proteome</keyword>
<keyword id="KW-0677">Repeat</keyword>
<keyword id="KW-0949">S-adenosyl-L-methionine</keyword>
<keyword id="KW-0804">Transcription</keyword>
<keyword id="KW-0805">Transcription regulation</keyword>
<keyword id="KW-0808">Transferase</keyword>
<evidence type="ECO:0000250" key="1"/>
<evidence type="ECO:0000250" key="2">
    <source>
        <dbReference type="UniProtKB" id="Q04089"/>
    </source>
</evidence>
<evidence type="ECO:0000255" key="3">
    <source>
        <dbReference type="PROSITE-ProRule" id="PRU00902"/>
    </source>
</evidence>
<evidence type="ECO:0000256" key="4">
    <source>
        <dbReference type="SAM" id="MobiDB-lite"/>
    </source>
</evidence>
<feature type="chain" id="PRO_0000270616" description="Histone-lysine N-methyltransferase, H3 lysine-79 specific">
    <location>
        <begin position="1"/>
        <end position="798"/>
    </location>
</feature>
<feature type="domain" description="DOT1" evidence="3">
    <location>
        <begin position="439"/>
        <end position="751"/>
    </location>
</feature>
<feature type="region of interest" description="Disordered" evidence="4">
    <location>
        <begin position="1"/>
        <end position="242"/>
    </location>
</feature>
<feature type="region of interest" description="Disordered" evidence="4">
    <location>
        <begin position="372"/>
        <end position="425"/>
    </location>
</feature>
<feature type="region of interest" description="Disordered" evidence="4">
    <location>
        <begin position="450"/>
        <end position="469"/>
    </location>
</feature>
<feature type="compositionally biased region" description="Low complexity" evidence="4">
    <location>
        <begin position="9"/>
        <end position="22"/>
    </location>
</feature>
<feature type="compositionally biased region" description="Low complexity" evidence="4">
    <location>
        <begin position="29"/>
        <end position="42"/>
    </location>
</feature>
<feature type="compositionally biased region" description="Low complexity" evidence="4">
    <location>
        <begin position="53"/>
        <end position="73"/>
    </location>
</feature>
<feature type="compositionally biased region" description="Basic and acidic residues" evidence="4">
    <location>
        <begin position="91"/>
        <end position="105"/>
    </location>
</feature>
<feature type="compositionally biased region" description="Polar residues" evidence="4">
    <location>
        <begin position="108"/>
        <end position="117"/>
    </location>
</feature>
<feature type="compositionally biased region" description="Low complexity" evidence="4">
    <location>
        <begin position="125"/>
        <end position="146"/>
    </location>
</feature>
<feature type="compositionally biased region" description="Basic and acidic residues" evidence="4">
    <location>
        <begin position="155"/>
        <end position="168"/>
    </location>
</feature>
<feature type="compositionally biased region" description="Polar residues" evidence="4">
    <location>
        <begin position="175"/>
        <end position="184"/>
    </location>
</feature>
<feature type="compositionally biased region" description="Polar residues" evidence="4">
    <location>
        <begin position="220"/>
        <end position="242"/>
    </location>
</feature>
<feature type="compositionally biased region" description="Polar residues" evidence="4">
    <location>
        <begin position="405"/>
        <end position="414"/>
    </location>
</feature>
<feature type="compositionally biased region" description="Low complexity" evidence="4">
    <location>
        <begin position="415"/>
        <end position="425"/>
    </location>
</feature>
<feature type="binding site" evidence="3">
    <location>
        <begin position="556"/>
        <end position="559"/>
    </location>
    <ligand>
        <name>S-adenosyl-L-methionine</name>
        <dbReference type="ChEBI" id="CHEBI:59789"/>
    </ligand>
</feature>
<feature type="binding site" evidence="3">
    <location>
        <begin position="579"/>
        <end position="588"/>
    </location>
    <ligand>
        <name>S-adenosyl-L-methionine</name>
        <dbReference type="ChEBI" id="CHEBI:59789"/>
    </ligand>
</feature>
<feature type="binding site" evidence="3">
    <location>
        <position position="605"/>
    </location>
    <ligand>
        <name>S-adenosyl-L-methionine</name>
        <dbReference type="ChEBI" id="CHEBI:59789"/>
    </ligand>
</feature>
<feature type="binding site" evidence="3">
    <location>
        <begin position="642"/>
        <end position="643"/>
    </location>
    <ligand>
        <name>S-adenosyl-L-methionine</name>
        <dbReference type="ChEBI" id="CHEBI:59789"/>
    </ligand>
</feature>
<gene>
    <name type="primary">DOT1</name>
    <name type="ORF">UMAG_05545</name>
</gene>
<organism>
    <name type="scientific">Mycosarcoma maydis</name>
    <name type="common">Corn smut fungus</name>
    <name type="synonym">Ustilago maydis</name>
    <dbReference type="NCBI Taxonomy" id="5270"/>
    <lineage>
        <taxon>Eukaryota</taxon>
        <taxon>Fungi</taxon>
        <taxon>Dikarya</taxon>
        <taxon>Basidiomycota</taxon>
        <taxon>Ustilaginomycotina</taxon>
        <taxon>Ustilaginomycetes</taxon>
        <taxon>Ustilaginales</taxon>
        <taxon>Ustilaginaceae</taxon>
        <taxon>Mycosarcoma</taxon>
    </lineage>
</organism>
<comment type="function">
    <text evidence="2">Histone methyltransferase that specifically trimethylates histone H3 to form H3K79me3. This methylation is required for telomere silencing and for the pachytene checkpoint during the meiotic cell cycle by allowing the recruitment of RAD9 to double strand breaks. Nucleosomes are preferred as substrate compared to free histone.</text>
</comment>
<comment type="catalytic activity">
    <reaction evidence="2 3">
        <text>L-lysyl(79)-[histone H3] + 3 S-adenosyl-L-methionine = N(6),N(6),N(6)-trimethyl-L-lysyl(79)-[histone H3] + 3 S-adenosyl-L-homocysteine + 3 H(+)</text>
        <dbReference type="Rhea" id="RHEA:60328"/>
        <dbReference type="Rhea" id="RHEA-COMP:15549"/>
        <dbReference type="Rhea" id="RHEA-COMP:15552"/>
        <dbReference type="ChEBI" id="CHEBI:15378"/>
        <dbReference type="ChEBI" id="CHEBI:29969"/>
        <dbReference type="ChEBI" id="CHEBI:57856"/>
        <dbReference type="ChEBI" id="CHEBI:59789"/>
        <dbReference type="ChEBI" id="CHEBI:61961"/>
        <dbReference type="EC" id="2.1.1.360"/>
    </reaction>
</comment>
<comment type="activity regulation">
    <text evidence="1">Ubiquitination of histone H2B to form H2BK123ub1 is required for efficient DOT1 methyltransferase activity on histone H3.</text>
</comment>
<comment type="subcellular location">
    <subcellularLocation>
        <location evidence="1">Nucleus</location>
    </subcellularLocation>
</comment>
<comment type="miscellaneous">
    <text>In contrast to other lysine histone methyltransferases, it does not contain a SET domain, suggesting the existence of another mechanism for methylation of lysine residues of histones.</text>
</comment>
<comment type="similarity">
    <text evidence="3">Belongs to the class I-like SAM-binding methyltransferase superfamily. DOT1 family.</text>
</comment>